<proteinExistence type="predicted"/>
<accession>P64505</accession>
<accession>P76274</accession>
<reference key="1">
    <citation type="journal article" date="2002" name="Nucleic Acids Res.">
        <title>Genome sequence of Shigella flexneri 2a: insights into pathogenicity through comparison with genomes of Escherichia coli K12 and O157.</title>
        <authorList>
            <person name="Jin Q."/>
            <person name="Yuan Z."/>
            <person name="Xu J."/>
            <person name="Wang Y."/>
            <person name="Shen Y."/>
            <person name="Lu W."/>
            <person name="Wang J."/>
            <person name="Liu H."/>
            <person name="Yang J."/>
            <person name="Yang F."/>
            <person name="Zhang X."/>
            <person name="Zhang J."/>
            <person name="Yang G."/>
            <person name="Wu H."/>
            <person name="Qu D."/>
            <person name="Dong J."/>
            <person name="Sun L."/>
            <person name="Xue Y."/>
            <person name="Zhao A."/>
            <person name="Gao Y."/>
            <person name="Zhu J."/>
            <person name="Kan B."/>
            <person name="Ding K."/>
            <person name="Chen S."/>
            <person name="Cheng H."/>
            <person name="Yao Z."/>
            <person name="He B."/>
            <person name="Chen R."/>
            <person name="Ma D."/>
            <person name="Qiang B."/>
            <person name="Wen Y."/>
            <person name="Hou Y."/>
            <person name="Yu J."/>
        </authorList>
    </citation>
    <scope>NUCLEOTIDE SEQUENCE [LARGE SCALE GENOMIC DNA]</scope>
    <source>
        <strain>301 / Serotype 2a</strain>
    </source>
</reference>
<reference key="2">
    <citation type="journal article" date="2003" name="Infect. Immun.">
        <title>Complete genome sequence and comparative genomics of Shigella flexneri serotype 2a strain 2457T.</title>
        <authorList>
            <person name="Wei J."/>
            <person name="Goldberg M.B."/>
            <person name="Burland V."/>
            <person name="Venkatesan M.M."/>
            <person name="Deng W."/>
            <person name="Fournier G."/>
            <person name="Mayhew G.F."/>
            <person name="Plunkett G. III"/>
            <person name="Rose D.J."/>
            <person name="Darling A."/>
            <person name="Mau B."/>
            <person name="Perna N.T."/>
            <person name="Payne S.M."/>
            <person name="Runyen-Janecky L.J."/>
            <person name="Zhou S."/>
            <person name="Schwartz D.C."/>
            <person name="Blattner F.R."/>
        </authorList>
    </citation>
    <scope>NUCLEOTIDE SEQUENCE [LARGE SCALE GENOMIC DNA]</scope>
    <source>
        <strain>ATCC 700930 / 2457T / Serotype 2a</strain>
    </source>
</reference>
<name>YEBV_SHIFL</name>
<keyword id="KW-1185">Reference proteome</keyword>
<sequence>MKTSVRIGAFEIDDGELHGESPGDRTLTIPCKSDPDLCMQLDAWDAETSIPALLNGEHSVLYRTRYDQQSDAWIMRLA</sequence>
<protein>
    <recommendedName>
        <fullName>Uncharacterized protein YebV</fullName>
    </recommendedName>
</protein>
<feature type="chain" id="PRO_0000169059" description="Uncharacterized protein YebV">
    <location>
        <begin position="1"/>
        <end position="78"/>
    </location>
</feature>
<organism>
    <name type="scientific">Shigella flexneri</name>
    <dbReference type="NCBI Taxonomy" id="623"/>
    <lineage>
        <taxon>Bacteria</taxon>
        <taxon>Pseudomonadati</taxon>
        <taxon>Pseudomonadota</taxon>
        <taxon>Gammaproteobacteria</taxon>
        <taxon>Enterobacterales</taxon>
        <taxon>Enterobacteriaceae</taxon>
        <taxon>Shigella</taxon>
    </lineage>
</organism>
<dbReference type="EMBL" id="AE005674">
    <property type="protein sequence ID" value="AAN42991.2"/>
    <property type="molecule type" value="Genomic_DNA"/>
</dbReference>
<dbReference type="EMBL" id="AE014073">
    <property type="protein sequence ID" value="AAP16888.1"/>
    <property type="molecule type" value="Genomic_DNA"/>
</dbReference>
<dbReference type="RefSeq" id="NP_707284.2">
    <property type="nucleotide sequence ID" value="NC_004337.2"/>
</dbReference>
<dbReference type="RefSeq" id="WP_001295499.1">
    <property type="nucleotide sequence ID" value="NZ_WPGW01000080.1"/>
</dbReference>
<dbReference type="SMR" id="P64505"/>
<dbReference type="STRING" id="198214.SF1389"/>
<dbReference type="PaxDb" id="198214-SF1389"/>
<dbReference type="GeneID" id="1024483"/>
<dbReference type="KEGG" id="sfl:SF1389"/>
<dbReference type="KEGG" id="sfx:S1505"/>
<dbReference type="PATRIC" id="fig|198214.7.peg.1636"/>
<dbReference type="HOGENOM" id="CLU_160612_0_0_6"/>
<dbReference type="Proteomes" id="UP000001006">
    <property type="component" value="Chromosome"/>
</dbReference>
<dbReference type="Proteomes" id="UP000002673">
    <property type="component" value="Chromosome"/>
</dbReference>
<dbReference type="InterPro" id="IPR009950">
    <property type="entry name" value="DUF1480"/>
</dbReference>
<dbReference type="Pfam" id="PF07351">
    <property type="entry name" value="DUF1480"/>
    <property type="match status" value="1"/>
</dbReference>
<gene>
    <name type="primary">yebV</name>
    <name type="ordered locus">SF1389</name>
    <name type="ordered locus">S1505</name>
</gene>